<name>UFO_ARATH</name>
<protein>
    <recommendedName>
        <fullName>Protein UNUSUAL FLORAL ORGANS</fullName>
    </recommendedName>
    <alternativeName>
        <fullName>F-box only protein 1</fullName>
        <shortName>AtFBX1</shortName>
    </alternativeName>
</protein>
<sequence length="442" mass="49047">MDSTVFINNPSLTLPFSYTFTSSSNSSTTTSTTTDSSSGQWMDGRIWSKLPPPLLDRVIAFLPPPAFFRTRCVCKRFYSLLFSNTFLETYLQLLPLRHNCFLFFKHKTLKSYIYKRGGTNDDDSNKAEGFLFDPNEIRWYRLSFAYIPSGFYPSGSSGGLVSWVSEEAGLKTILLCNPLVGSVSQLPPISRPRLFPSIGLSVTPTSIDVTVAGDDLISPYAVKNLSSESFHVDAGGFFSLWAMTSSLPRLCSLESGKMVYVQGKFYCMNYSPFSVLSYEVTGNRWIKIQAPMRRFLRSPSLLESKGRLILVAAVEKSKLNVPKSLRLWSLQQDNATWVEIERMPQPLYTQFAAEEGGKGFECVGNQEFVMIVLRGTSLQLLFDIVRKSWLWVPPCPYSGSGGGSSGGGSDGEVLQGFAYDPVLTTPVVSLLDQLTLPFPGVC</sequence>
<feature type="chain" id="PRO_0000119966" description="Protein UNUSUAL FLORAL ORGANS">
    <location>
        <begin position="1"/>
        <end position="442"/>
    </location>
</feature>
<feature type="domain" description="F-box" evidence="2">
    <location>
        <begin position="44"/>
        <end position="90"/>
    </location>
</feature>
<feature type="region of interest" description="Interaction with SKP1A" evidence="6">
    <location>
        <begin position="1"/>
        <end position="85"/>
    </location>
</feature>
<feature type="sequence conflict" description="In Ref. 1; CAA61508." evidence="9" ref="1">
    <original>G</original>
    <variation>C</variation>
    <location>
        <position position="44"/>
    </location>
</feature>
<dbReference type="EMBL" id="X89224">
    <property type="protein sequence ID" value="CAA61508.1"/>
    <property type="molecule type" value="Genomic_DNA"/>
</dbReference>
<dbReference type="EMBL" id="AC000107">
    <property type="protein sequence ID" value="AAF98199.1"/>
    <property type="molecule type" value="Genomic_DNA"/>
</dbReference>
<dbReference type="EMBL" id="CP002684">
    <property type="protein sequence ID" value="AEE31296.1"/>
    <property type="molecule type" value="Genomic_DNA"/>
</dbReference>
<dbReference type="EMBL" id="DQ056469">
    <property type="protein sequence ID" value="AAY78626.1"/>
    <property type="molecule type" value="mRNA"/>
</dbReference>
<dbReference type="PIR" id="S57710">
    <property type="entry name" value="S57710"/>
</dbReference>
<dbReference type="RefSeq" id="NP_564368.1">
    <property type="nucleotide sequence ID" value="NM_102834.2"/>
</dbReference>
<dbReference type="BioGRID" id="25217">
    <property type="interactions" value="15"/>
</dbReference>
<dbReference type="FunCoup" id="Q39090">
    <property type="interactions" value="312"/>
</dbReference>
<dbReference type="IntAct" id="Q39090">
    <property type="interactions" value="15"/>
</dbReference>
<dbReference type="STRING" id="3702.Q39090"/>
<dbReference type="PaxDb" id="3702-AT1G30950.1"/>
<dbReference type="EnsemblPlants" id="AT1G30950.1">
    <property type="protein sequence ID" value="AT1G30950.1"/>
    <property type="gene ID" value="AT1G30950"/>
</dbReference>
<dbReference type="GeneID" id="839982"/>
<dbReference type="Gramene" id="AT1G30950.1">
    <property type="protein sequence ID" value="AT1G30950.1"/>
    <property type="gene ID" value="AT1G30950"/>
</dbReference>
<dbReference type="KEGG" id="ath:AT1G30950"/>
<dbReference type="Araport" id="AT1G30950"/>
<dbReference type="TAIR" id="AT1G30950">
    <property type="gene designation" value="UFO"/>
</dbReference>
<dbReference type="eggNOG" id="ENOG502QR12">
    <property type="taxonomic scope" value="Eukaryota"/>
</dbReference>
<dbReference type="HOGENOM" id="CLU_038778_2_1_1"/>
<dbReference type="InParanoid" id="Q39090"/>
<dbReference type="OMA" id="FHIDAGG"/>
<dbReference type="OrthoDB" id="1893842at2759"/>
<dbReference type="PhylomeDB" id="Q39090"/>
<dbReference type="UniPathway" id="UPA00143"/>
<dbReference type="PRO" id="PR:Q39090"/>
<dbReference type="Proteomes" id="UP000006548">
    <property type="component" value="Chromosome 1"/>
</dbReference>
<dbReference type="ExpressionAtlas" id="Q39090">
    <property type="expression patterns" value="baseline and differential"/>
</dbReference>
<dbReference type="GO" id="GO:0005634">
    <property type="term" value="C:nucleus"/>
    <property type="evidence" value="ECO:0007669"/>
    <property type="project" value="UniProtKB-SubCell"/>
</dbReference>
<dbReference type="GO" id="GO:0004842">
    <property type="term" value="F:ubiquitin-protein transferase activity"/>
    <property type="evidence" value="ECO:0000315"/>
    <property type="project" value="TAIR"/>
</dbReference>
<dbReference type="GO" id="GO:0030154">
    <property type="term" value="P:cell differentiation"/>
    <property type="evidence" value="ECO:0007669"/>
    <property type="project" value="UniProtKB-KW"/>
</dbReference>
<dbReference type="GO" id="GO:0009908">
    <property type="term" value="P:flower development"/>
    <property type="evidence" value="ECO:0007669"/>
    <property type="project" value="UniProtKB-KW"/>
</dbReference>
<dbReference type="GO" id="GO:0009933">
    <property type="term" value="P:meristem structural organization"/>
    <property type="evidence" value="ECO:0000315"/>
    <property type="project" value="TAIR"/>
</dbReference>
<dbReference type="GO" id="GO:0016567">
    <property type="term" value="P:protein ubiquitination"/>
    <property type="evidence" value="ECO:0007669"/>
    <property type="project" value="UniProtKB-UniPathway"/>
</dbReference>
<dbReference type="GO" id="GO:0006355">
    <property type="term" value="P:regulation of DNA-templated transcription"/>
    <property type="evidence" value="ECO:0000314"/>
    <property type="project" value="TAIR"/>
</dbReference>
<dbReference type="GO" id="GO:0031146">
    <property type="term" value="P:SCF-dependent proteasomal ubiquitin-dependent protein catabolic process"/>
    <property type="evidence" value="ECO:0000316"/>
    <property type="project" value="TAIR"/>
</dbReference>
<dbReference type="FunFam" id="2.120.10.80:FF:000202">
    <property type="entry name" value="Protein UNUSUAL FLORAL ORGANS"/>
    <property type="match status" value="1"/>
</dbReference>
<dbReference type="FunFam" id="1.20.1280.50:FF:000040">
    <property type="entry name" value="protein UNUSUAL FLORAL ORGANS"/>
    <property type="match status" value="1"/>
</dbReference>
<dbReference type="Gene3D" id="1.20.1280.50">
    <property type="match status" value="1"/>
</dbReference>
<dbReference type="Gene3D" id="2.120.10.80">
    <property type="entry name" value="Kelch-type beta propeller"/>
    <property type="match status" value="1"/>
</dbReference>
<dbReference type="InterPro" id="IPR036047">
    <property type="entry name" value="F-box-like_dom_sf"/>
</dbReference>
<dbReference type="InterPro" id="IPR001810">
    <property type="entry name" value="F-box_dom"/>
</dbReference>
<dbReference type="InterPro" id="IPR015915">
    <property type="entry name" value="Kelch-typ_b-propeller"/>
</dbReference>
<dbReference type="InterPro" id="IPR005174">
    <property type="entry name" value="KIB1-4_b-propeller"/>
</dbReference>
<dbReference type="InterPro" id="IPR050796">
    <property type="entry name" value="SCF_F-box_component"/>
</dbReference>
<dbReference type="PANTHER" id="PTHR31672">
    <property type="entry name" value="BNACNNG10540D PROTEIN"/>
    <property type="match status" value="1"/>
</dbReference>
<dbReference type="PANTHER" id="PTHR31672:SF12">
    <property type="entry name" value="F-BOX DOMAIN-CONTAINING PROTEIN"/>
    <property type="match status" value="1"/>
</dbReference>
<dbReference type="Pfam" id="PF03478">
    <property type="entry name" value="Beta-prop_KIB1-4"/>
    <property type="match status" value="1"/>
</dbReference>
<dbReference type="Pfam" id="PF00646">
    <property type="entry name" value="F-box"/>
    <property type="match status" value="1"/>
</dbReference>
<dbReference type="SMART" id="SM00256">
    <property type="entry name" value="FBOX"/>
    <property type="match status" value="1"/>
</dbReference>
<dbReference type="SUPFAM" id="SSF81383">
    <property type="entry name" value="F-box domain"/>
    <property type="match status" value="1"/>
</dbReference>
<dbReference type="SUPFAM" id="SSF117281">
    <property type="entry name" value="Kelch motif"/>
    <property type="match status" value="1"/>
</dbReference>
<dbReference type="PROSITE" id="PS50181">
    <property type="entry name" value="FBOX"/>
    <property type="match status" value="1"/>
</dbReference>
<evidence type="ECO:0000250" key="1"/>
<evidence type="ECO:0000255" key="2">
    <source>
        <dbReference type="PROSITE-ProRule" id="PRU00080"/>
    </source>
</evidence>
<evidence type="ECO:0000269" key="3">
    <source>
    </source>
</evidence>
<evidence type="ECO:0000269" key="4">
    <source>
    </source>
</evidence>
<evidence type="ECO:0000269" key="5">
    <source>
    </source>
</evidence>
<evidence type="ECO:0000269" key="6">
    <source>
    </source>
</evidence>
<evidence type="ECO:0000269" key="7">
    <source>
    </source>
</evidence>
<evidence type="ECO:0000269" key="8">
    <source>
    </source>
</evidence>
<evidence type="ECO:0000305" key="9"/>
<organism>
    <name type="scientific">Arabidopsis thaliana</name>
    <name type="common">Mouse-ear cress</name>
    <dbReference type="NCBI Taxonomy" id="3702"/>
    <lineage>
        <taxon>Eukaryota</taxon>
        <taxon>Viridiplantae</taxon>
        <taxon>Streptophyta</taxon>
        <taxon>Embryophyta</taxon>
        <taxon>Tracheophyta</taxon>
        <taxon>Spermatophyta</taxon>
        <taxon>Magnoliopsida</taxon>
        <taxon>eudicotyledons</taxon>
        <taxon>Gunneridae</taxon>
        <taxon>Pentapetalae</taxon>
        <taxon>rosids</taxon>
        <taxon>malvids</taxon>
        <taxon>Brassicales</taxon>
        <taxon>Brassicaceae</taxon>
        <taxon>Camelineae</taxon>
        <taxon>Arabidopsis</taxon>
    </lineage>
</organism>
<comment type="function">
    <text evidence="1 3 7 8">Component of SCF(ASK-cullin-F-box) E3 ubiquitin ligase complexes, which may mediate the ubiquitination and subsequent proteasomal degradation of target proteins (By similarity). Considered as a meristem identity factor required for normal growth of the young floral meristem. Acts together with LEAFY to positively regulate the B class floral homeotic genes APETALA3 and PISTILLATA. In this way, operates as a region-specific regulator for petal and stamen development. Alternatively, may play a role as a negative regulator of the C class floral homeotic genes. Interacts together with the SKP1-like protein ASK1 to form a ubiquitin E3 ligase complex and could indirectly promote the ubiquitination and degradation of specific proteins controlling the floral primordia development like repressors of B class floral homeotic genes.</text>
</comment>
<comment type="pathway">
    <text>Protein modification; protein ubiquitination.</text>
</comment>
<comment type="subunit">
    <text evidence="4 5 6">Part of a putative SCF (ASK/Cullin/F-box) ubiquitin ligase complex. Interacts with SKP1A/ASK1, SKP1B/ASK2 and ASK11.</text>
</comment>
<comment type="interaction">
    <interactant intactId="EBI-590758">
        <id>Q39090</id>
    </interactant>
    <interactant intactId="EBI-401185">
        <id>O49484</id>
        <label>ASK11</label>
    </interactant>
    <organismsDiffer>false</organismsDiffer>
    <experiments>3</experiments>
</comment>
<comment type="interaction">
    <interactant intactId="EBI-590758">
        <id>Q39090</id>
    </interactant>
    <interactant intactId="EBI-1644366">
        <id>Q00958</id>
        <label>LFY</label>
    </interactant>
    <organismsDiffer>false</organismsDiffer>
    <experiments>6</experiments>
</comment>
<comment type="interaction">
    <interactant intactId="EBI-590758">
        <id>Q39090</id>
    </interactant>
    <interactant intactId="EBI-532357">
        <id>Q39255</id>
        <label>SKP1A</label>
    </interactant>
    <organismsDiffer>false</organismsDiffer>
    <experiments>6</experiments>
</comment>
<comment type="interaction">
    <interactant intactId="EBI-590758">
        <id>Q39090</id>
    </interactant>
    <interactant intactId="EBI-604076">
        <id>Q9FHW7</id>
        <label>SKP1B</label>
    </interactant>
    <organismsDiffer>false</organismsDiffer>
    <experiments>5</experiments>
</comment>
<comment type="interaction">
    <interactant intactId="EBI-590758">
        <id>Q39090</id>
    </interactant>
    <interactant intactId="EBI-401164">
        <id>P43291</id>
        <label>SRK2A</label>
    </interactant>
    <organismsDiffer>false</organismsDiffer>
    <experiments>3</experiments>
</comment>
<comment type="subcellular location">
    <subcellularLocation>
        <location evidence="9">Nucleus</location>
    </subcellularLocation>
</comment>
<comment type="developmental stage">
    <text evidence="8">Detected early throughout the shoot apical meristem, but not in the emerging leaf primordia. Restricted later to the junction between sepal and petal primordia.</text>
</comment>
<comment type="domain">
    <text evidence="1">The F-box is necessary for the interaction with ASK proteins.</text>
</comment>
<comment type="miscellaneous">
    <text>Mutations in the UFO gene result in the formation of unusual floral organs.</text>
</comment>
<gene>
    <name type="primary">UFO</name>
    <name type="synonym">FBX1</name>
    <name type="ordered locus">At1g30950</name>
    <name type="ORF">F17F8.16</name>
</gene>
<accession>Q39090</accession>
<accession>Q4PT17</accession>
<accession>Q9FYI4</accession>
<proteinExistence type="evidence at protein level"/>
<reference key="1">
    <citation type="journal article" date="1995" name="Plant Cell">
        <title>Parallels between UNUSUAL FLORAL ORGANS and FIMBRIATA, genes controlling flower development in Arabidopsis and Antirrhinum.</title>
        <authorList>
            <person name="Ingram G.C."/>
            <person name="Goodrich J."/>
            <person name="Wilkinson M.D."/>
            <person name="Simon R."/>
            <person name="Haughn G.W."/>
            <person name="Coen E.S."/>
        </authorList>
    </citation>
    <scope>NUCLEOTIDE SEQUENCE [GENOMIC DNA]</scope>
    <scope>CHARACTERIZATION</scope>
    <source>
        <strain>cv. Landsberg erecta</strain>
    </source>
</reference>
<reference key="2">
    <citation type="journal article" date="2000" name="Nature">
        <title>Sequence and analysis of chromosome 1 of the plant Arabidopsis thaliana.</title>
        <authorList>
            <person name="Theologis A."/>
            <person name="Ecker J.R."/>
            <person name="Palm C.J."/>
            <person name="Federspiel N.A."/>
            <person name="Kaul S."/>
            <person name="White O."/>
            <person name="Alonso J."/>
            <person name="Altafi H."/>
            <person name="Araujo R."/>
            <person name="Bowman C.L."/>
            <person name="Brooks S.Y."/>
            <person name="Buehler E."/>
            <person name="Chan A."/>
            <person name="Chao Q."/>
            <person name="Chen H."/>
            <person name="Cheuk R.F."/>
            <person name="Chin C.W."/>
            <person name="Chung M.K."/>
            <person name="Conn L."/>
            <person name="Conway A.B."/>
            <person name="Conway A.R."/>
            <person name="Creasy T.H."/>
            <person name="Dewar K."/>
            <person name="Dunn P."/>
            <person name="Etgu P."/>
            <person name="Feldblyum T.V."/>
            <person name="Feng J.-D."/>
            <person name="Fong B."/>
            <person name="Fujii C.Y."/>
            <person name="Gill J.E."/>
            <person name="Goldsmith A.D."/>
            <person name="Haas B."/>
            <person name="Hansen N.F."/>
            <person name="Hughes B."/>
            <person name="Huizar L."/>
            <person name="Hunter J.L."/>
            <person name="Jenkins J."/>
            <person name="Johnson-Hopson C."/>
            <person name="Khan S."/>
            <person name="Khaykin E."/>
            <person name="Kim C.J."/>
            <person name="Koo H.L."/>
            <person name="Kremenetskaia I."/>
            <person name="Kurtz D.B."/>
            <person name="Kwan A."/>
            <person name="Lam B."/>
            <person name="Langin-Hooper S."/>
            <person name="Lee A."/>
            <person name="Lee J.M."/>
            <person name="Lenz C.A."/>
            <person name="Li J.H."/>
            <person name="Li Y.-P."/>
            <person name="Lin X."/>
            <person name="Liu S.X."/>
            <person name="Liu Z.A."/>
            <person name="Luros J.S."/>
            <person name="Maiti R."/>
            <person name="Marziali A."/>
            <person name="Militscher J."/>
            <person name="Miranda M."/>
            <person name="Nguyen M."/>
            <person name="Nierman W.C."/>
            <person name="Osborne B.I."/>
            <person name="Pai G."/>
            <person name="Peterson J."/>
            <person name="Pham P.K."/>
            <person name="Rizzo M."/>
            <person name="Rooney T."/>
            <person name="Rowley D."/>
            <person name="Sakano H."/>
            <person name="Salzberg S.L."/>
            <person name="Schwartz J.R."/>
            <person name="Shinn P."/>
            <person name="Southwick A.M."/>
            <person name="Sun H."/>
            <person name="Tallon L.J."/>
            <person name="Tambunga G."/>
            <person name="Toriumi M.J."/>
            <person name="Town C.D."/>
            <person name="Utterback T."/>
            <person name="Van Aken S."/>
            <person name="Vaysberg M."/>
            <person name="Vysotskaia V.S."/>
            <person name="Walker M."/>
            <person name="Wu D."/>
            <person name="Yu G."/>
            <person name="Fraser C.M."/>
            <person name="Venter J.C."/>
            <person name="Davis R.W."/>
        </authorList>
    </citation>
    <scope>NUCLEOTIDE SEQUENCE [LARGE SCALE GENOMIC DNA]</scope>
    <source>
        <strain>cv. Columbia</strain>
    </source>
</reference>
<reference key="3">
    <citation type="journal article" date="2017" name="Plant J.">
        <title>Araport11: a complete reannotation of the Arabidopsis thaliana reference genome.</title>
        <authorList>
            <person name="Cheng C.Y."/>
            <person name="Krishnakumar V."/>
            <person name="Chan A.P."/>
            <person name="Thibaud-Nissen F."/>
            <person name="Schobel S."/>
            <person name="Town C.D."/>
        </authorList>
    </citation>
    <scope>GENOME REANNOTATION</scope>
    <source>
        <strain>cv. Columbia</strain>
    </source>
</reference>
<reference key="4">
    <citation type="submission" date="2005-05" db="EMBL/GenBank/DDBJ databases">
        <authorList>
            <person name="Underwood B.A."/>
            <person name="Xiao Y.-L."/>
            <person name="Moskal W.A. Jr."/>
            <person name="Monaghan E.L."/>
            <person name="Wang W."/>
            <person name="Redman J.C."/>
            <person name="Wu H.C."/>
            <person name="Utterback T."/>
            <person name="Town C.D."/>
        </authorList>
    </citation>
    <scope>NUCLEOTIDE SEQUENCE [LARGE SCALE MRNA]</scope>
    <source>
        <strain>cv. Columbia</strain>
    </source>
</reference>
<reference key="5">
    <citation type="journal article" date="1996" name="Development">
        <title>The Arabidopsis homeotic genes APETALA3 and PISTILLATA are sufficient to provide the B class organ identity function.</title>
        <authorList>
            <person name="Krizek B.A."/>
            <person name="Meyerowitz E.M."/>
        </authorList>
    </citation>
    <scope>FUNCTION</scope>
</reference>
<reference key="6">
    <citation type="journal article" date="1997" name="Curr. Biol.">
        <title>A LEAFY co-regulator encoded by UNUSUAL FLORAL ORGANS.</title>
        <authorList>
            <person name="Lee I."/>
            <person name="Wolfe D.S."/>
            <person name="Nilsson O."/>
            <person name="Weigel D."/>
        </authorList>
    </citation>
    <scope>FUNCTION</scope>
    <scope>DEVELOPMENTAL STAGE</scope>
</reference>
<reference key="7">
    <citation type="journal article" date="1999" name="Plant J.">
        <title>The UNUSUAL FLORAL ORGANS gene of Arabidopsis thaliana is an F-box protein required for normal patterning and growth in the floral meristem.</title>
        <authorList>
            <person name="Samach A."/>
            <person name="Klenz J.E."/>
            <person name="Kohalmi S.E."/>
            <person name="Risseeuw E."/>
            <person name="Haughn G.W."/>
            <person name="Crosby W.L."/>
        </authorList>
    </citation>
    <scope>FUNCTION</scope>
</reference>
<reference key="8">
    <citation type="journal article" date="2000" name="Trends Plant Sci.">
        <title>F-box proteins in Arabidopsis.</title>
        <authorList>
            <person name="Xiao W."/>
            <person name="Jang J.-C."/>
        </authorList>
    </citation>
    <scope>GENE FAMILY</scope>
    <scope>NOMENCLATURE</scope>
</reference>
<reference key="9">
    <citation type="journal article" date="2001" name="Development">
        <title>The ASK1 gene regulates B function gene expression in cooperation with UFO and LEAFY in Arabidopsis.</title>
        <authorList>
            <person name="Zhao D."/>
            <person name="Yu Q."/>
            <person name="Chen M."/>
            <person name="Ma H."/>
        </authorList>
    </citation>
    <scope>SUBUNIT</scope>
</reference>
<reference key="10">
    <citation type="journal article" date="2002" name="Proc. Natl. Acad. Sci. U.S.A.">
        <title>The F-box subunit of the SCF E3 complex is encoded by a diverse superfamily of genes in Arabidopsis.</title>
        <authorList>
            <person name="Gagne J.M."/>
            <person name="Downes B.P."/>
            <person name="Shiu S.-H."/>
            <person name="Durski A.M."/>
            <person name="Vierstra R.D."/>
        </authorList>
    </citation>
    <scope>INTERACTION WITH SKP1A/ASK1; SKP1B/ASK2 AND ASK11</scope>
</reference>
<reference key="11">
    <citation type="journal article" date="2003" name="Proc. Natl. Acad. Sci. U.S.A.">
        <title>The F-box-containing protein UFO and AGAMOUS participate in antagonistic pathways governing early petal development in Arabidopsis.</title>
        <authorList>
            <person name="Durfee T."/>
            <person name="Roe J.L."/>
            <person name="Sessions R.A."/>
            <person name="Inouye C."/>
            <person name="Serikawa K."/>
            <person name="Feldmann K.A."/>
            <person name="Weigel D."/>
            <person name="Zambryski P.C."/>
        </authorList>
    </citation>
    <scope>INTERACTION WITH SKP1A</scope>
    <scope>DOMAIN</scope>
</reference>
<keyword id="KW-0010">Activator</keyword>
<keyword id="KW-0217">Developmental protein</keyword>
<keyword id="KW-0221">Differentiation</keyword>
<keyword id="KW-0287">Flowering</keyword>
<keyword id="KW-0539">Nucleus</keyword>
<keyword id="KW-1185">Reference proteome</keyword>
<keyword id="KW-0804">Transcription</keyword>
<keyword id="KW-0805">Transcription regulation</keyword>
<keyword id="KW-0833">Ubl conjugation pathway</keyword>